<protein>
    <recommendedName>
        <fullName evidence="2">Large ribosomal subunit protein bL27</fullName>
    </recommendedName>
    <alternativeName>
        <fullName evidence="3">50S ribosomal protein L27</fullName>
    </alternativeName>
</protein>
<reference key="1">
    <citation type="journal article" date="2003" name="Proc. Natl. Acad. Sci. U.S.A.">
        <title>The genome sequence of Clostridium tetani, the causative agent of tetanus disease.</title>
        <authorList>
            <person name="Brueggemann H."/>
            <person name="Baeumer S."/>
            <person name="Fricke W.F."/>
            <person name="Wiezer A."/>
            <person name="Liesegang H."/>
            <person name="Decker I."/>
            <person name="Herzberg C."/>
            <person name="Martinez-Arias R."/>
            <person name="Merkl R."/>
            <person name="Henne A."/>
            <person name="Gottschalk G."/>
        </authorList>
    </citation>
    <scope>NUCLEOTIDE SEQUENCE [LARGE SCALE GENOMIC DNA]</scope>
    <source>
        <strain>Massachusetts / E88</strain>
    </source>
</reference>
<name>RL27_CLOTE</name>
<evidence type="ECO:0000250" key="1">
    <source>
        <dbReference type="UniProtKB" id="Q2FXT0"/>
    </source>
</evidence>
<evidence type="ECO:0000255" key="2">
    <source>
        <dbReference type="HAMAP-Rule" id="MF_00539"/>
    </source>
</evidence>
<evidence type="ECO:0000305" key="3"/>
<accession>Q892N6</accession>
<proteinExistence type="inferred from homology"/>
<gene>
    <name evidence="2" type="primary">rpmA</name>
    <name type="ordered locus">CTC_02058</name>
</gene>
<feature type="propeptide" id="PRO_0000459889" evidence="1">
    <location>
        <begin position="1"/>
        <end position="9"/>
    </location>
</feature>
<feature type="chain" id="PRO_0000181077" description="Large ribosomal subunit protein bL27">
    <location>
        <begin position="10"/>
        <end position="101"/>
    </location>
</feature>
<organism>
    <name type="scientific">Clostridium tetani (strain Massachusetts / E88)</name>
    <dbReference type="NCBI Taxonomy" id="212717"/>
    <lineage>
        <taxon>Bacteria</taxon>
        <taxon>Bacillati</taxon>
        <taxon>Bacillota</taxon>
        <taxon>Clostridia</taxon>
        <taxon>Eubacteriales</taxon>
        <taxon>Clostridiaceae</taxon>
        <taxon>Clostridium</taxon>
    </lineage>
</organism>
<dbReference type="EMBL" id="AE015927">
    <property type="protein sequence ID" value="AAO36559.1"/>
    <property type="molecule type" value="Genomic_DNA"/>
</dbReference>
<dbReference type="RefSeq" id="WP_011100217.1">
    <property type="nucleotide sequence ID" value="NC_004557.1"/>
</dbReference>
<dbReference type="SMR" id="Q892N6"/>
<dbReference type="STRING" id="212717.CTC_02058"/>
<dbReference type="GeneID" id="24255066"/>
<dbReference type="KEGG" id="ctc:CTC_02058"/>
<dbReference type="HOGENOM" id="CLU_095424_4_0_9"/>
<dbReference type="OrthoDB" id="9803474at2"/>
<dbReference type="Proteomes" id="UP000001412">
    <property type="component" value="Chromosome"/>
</dbReference>
<dbReference type="GO" id="GO:0022625">
    <property type="term" value="C:cytosolic large ribosomal subunit"/>
    <property type="evidence" value="ECO:0007669"/>
    <property type="project" value="TreeGrafter"/>
</dbReference>
<dbReference type="GO" id="GO:0003735">
    <property type="term" value="F:structural constituent of ribosome"/>
    <property type="evidence" value="ECO:0007669"/>
    <property type="project" value="InterPro"/>
</dbReference>
<dbReference type="GO" id="GO:0006412">
    <property type="term" value="P:translation"/>
    <property type="evidence" value="ECO:0007669"/>
    <property type="project" value="UniProtKB-UniRule"/>
</dbReference>
<dbReference type="FunFam" id="2.40.50.100:FF:000004">
    <property type="entry name" value="50S ribosomal protein L27"/>
    <property type="match status" value="1"/>
</dbReference>
<dbReference type="Gene3D" id="2.40.50.100">
    <property type="match status" value="1"/>
</dbReference>
<dbReference type="HAMAP" id="MF_00539">
    <property type="entry name" value="Ribosomal_bL27"/>
    <property type="match status" value="1"/>
</dbReference>
<dbReference type="InterPro" id="IPR001684">
    <property type="entry name" value="Ribosomal_bL27"/>
</dbReference>
<dbReference type="InterPro" id="IPR018261">
    <property type="entry name" value="Ribosomal_bL27_CS"/>
</dbReference>
<dbReference type="NCBIfam" id="TIGR00062">
    <property type="entry name" value="L27"/>
    <property type="match status" value="1"/>
</dbReference>
<dbReference type="PANTHER" id="PTHR15893:SF0">
    <property type="entry name" value="LARGE RIBOSOMAL SUBUNIT PROTEIN BL27M"/>
    <property type="match status" value="1"/>
</dbReference>
<dbReference type="PANTHER" id="PTHR15893">
    <property type="entry name" value="RIBOSOMAL PROTEIN L27"/>
    <property type="match status" value="1"/>
</dbReference>
<dbReference type="Pfam" id="PF01016">
    <property type="entry name" value="Ribosomal_L27"/>
    <property type="match status" value="1"/>
</dbReference>
<dbReference type="PRINTS" id="PR00063">
    <property type="entry name" value="RIBOSOMALL27"/>
</dbReference>
<dbReference type="SUPFAM" id="SSF110324">
    <property type="entry name" value="Ribosomal L27 protein-like"/>
    <property type="match status" value="1"/>
</dbReference>
<dbReference type="PROSITE" id="PS00831">
    <property type="entry name" value="RIBOSOMAL_L27"/>
    <property type="match status" value="1"/>
</dbReference>
<sequence length="101" mass="10932">MLLMNLQLFATKKGVGSSKNGRDSEAKRLGVKCADGQFVLAGSILVRQRGTKIHPGQNVGRGGDDTLFSKVDGVVRYERVGKNKKRASVYPIDVEEVIAAE</sequence>
<keyword id="KW-1185">Reference proteome</keyword>
<keyword id="KW-0687">Ribonucleoprotein</keyword>
<keyword id="KW-0689">Ribosomal protein</keyword>
<comment type="PTM">
    <text evidence="1">The N-terminus is cleaved by ribosomal processing cysteine protease Prp.</text>
</comment>
<comment type="similarity">
    <text evidence="2">Belongs to the bacterial ribosomal protein bL27 family.</text>
</comment>